<feature type="chain" id="PRO_0000171563" description="Ribulose-phosphate 3-epimerase">
    <location>
        <begin position="1"/>
        <end position="228"/>
    </location>
</feature>
<feature type="active site" description="Proton acceptor" evidence="1">
    <location>
        <position position="36"/>
    </location>
</feature>
<feature type="active site" description="Proton donor" evidence="1">
    <location>
        <position position="177"/>
    </location>
</feature>
<feature type="binding site" evidence="1">
    <location>
        <position position="9"/>
    </location>
    <ligand>
        <name>substrate</name>
    </ligand>
</feature>
<feature type="binding site" evidence="1">
    <location>
        <position position="34"/>
    </location>
    <ligand>
        <name>a divalent metal cation</name>
        <dbReference type="ChEBI" id="CHEBI:60240"/>
    </ligand>
</feature>
<feature type="binding site" evidence="1">
    <location>
        <position position="36"/>
    </location>
    <ligand>
        <name>a divalent metal cation</name>
        <dbReference type="ChEBI" id="CHEBI:60240"/>
    </ligand>
</feature>
<feature type="binding site" evidence="1">
    <location>
        <position position="68"/>
    </location>
    <ligand>
        <name>a divalent metal cation</name>
        <dbReference type="ChEBI" id="CHEBI:60240"/>
    </ligand>
</feature>
<feature type="binding site" evidence="1">
    <location>
        <position position="68"/>
    </location>
    <ligand>
        <name>substrate</name>
    </ligand>
</feature>
<feature type="binding site" evidence="1">
    <location>
        <begin position="177"/>
        <end position="179"/>
    </location>
    <ligand>
        <name>substrate</name>
    </ligand>
</feature>
<feature type="binding site" evidence="1">
    <location>
        <position position="177"/>
    </location>
    <ligand>
        <name>a divalent metal cation</name>
        <dbReference type="ChEBI" id="CHEBI:60240"/>
    </ligand>
</feature>
<feature type="binding site" evidence="1">
    <location>
        <begin position="199"/>
        <end position="200"/>
    </location>
    <ligand>
        <name>substrate</name>
    </ligand>
</feature>
<organism>
    <name type="scientific">Buchnera aphidicola subsp. Schizaphis graminum (strain Sg)</name>
    <dbReference type="NCBI Taxonomy" id="198804"/>
    <lineage>
        <taxon>Bacteria</taxon>
        <taxon>Pseudomonadati</taxon>
        <taxon>Pseudomonadota</taxon>
        <taxon>Gammaproteobacteria</taxon>
        <taxon>Enterobacterales</taxon>
        <taxon>Erwiniaceae</taxon>
        <taxon>Buchnera</taxon>
    </lineage>
</organism>
<gene>
    <name evidence="1" type="primary">rpe</name>
    <name type="ordered locus">BUsg_518</name>
</gene>
<reference key="1">
    <citation type="journal article" date="2002" name="Science">
        <title>50 million years of genomic stasis in endosymbiotic bacteria.</title>
        <authorList>
            <person name="Tamas I."/>
            <person name="Klasson L."/>
            <person name="Canbaeck B."/>
            <person name="Naeslund A.K."/>
            <person name="Eriksson A.-S."/>
            <person name="Wernegreen J.J."/>
            <person name="Sandstroem J.P."/>
            <person name="Moran N.A."/>
            <person name="Andersson S.G.E."/>
        </authorList>
    </citation>
    <scope>NUCLEOTIDE SEQUENCE [LARGE SCALE GENOMIC DNA]</scope>
    <source>
        <strain>Sg</strain>
    </source>
</reference>
<accession>Q8K940</accession>
<name>RPE_BUCAP</name>
<sequence>MKKFFLASSILSADFARLGEDTKKAIDAGSDWIHFDVMDNHYVPNLTMGPMILKALRNYNITVPIDVHLMVKPVDNLIPQFAEAGADFITFHPESTDHIDRTLNLIKECGCKAGLALNPATSLNFLDYVMEKLDLILLMSVNPGFGNQSFLPTSFNKLREVRKKIELNSSNILLEVDGGVKLENISEVAFSGANVFVIGSGIFGYTDYNVIIKKIRKKLKNVYSTSIH</sequence>
<keyword id="KW-0119">Carbohydrate metabolism</keyword>
<keyword id="KW-0413">Isomerase</keyword>
<keyword id="KW-0479">Metal-binding</keyword>
<protein>
    <recommendedName>
        <fullName evidence="1">Ribulose-phosphate 3-epimerase</fullName>
        <ecNumber evidence="1">5.1.3.1</ecNumber>
    </recommendedName>
</protein>
<comment type="function">
    <text evidence="1">Catalyzes the reversible epimerization of D-ribulose 5-phosphate to D-xylulose 5-phosphate.</text>
</comment>
<comment type="catalytic activity">
    <reaction evidence="1">
        <text>D-ribulose 5-phosphate = D-xylulose 5-phosphate</text>
        <dbReference type="Rhea" id="RHEA:13677"/>
        <dbReference type="ChEBI" id="CHEBI:57737"/>
        <dbReference type="ChEBI" id="CHEBI:58121"/>
        <dbReference type="EC" id="5.1.3.1"/>
    </reaction>
</comment>
<comment type="cofactor">
    <cofactor evidence="1">
        <name>a divalent metal cation</name>
        <dbReference type="ChEBI" id="CHEBI:60240"/>
    </cofactor>
    <text evidence="1">Binds 1 divalent metal cation per subunit.</text>
</comment>
<comment type="pathway">
    <text evidence="1">Carbohydrate degradation.</text>
</comment>
<comment type="similarity">
    <text evidence="1">Belongs to the ribulose-phosphate 3-epimerase family.</text>
</comment>
<evidence type="ECO:0000255" key="1">
    <source>
        <dbReference type="HAMAP-Rule" id="MF_02227"/>
    </source>
</evidence>
<dbReference type="EC" id="5.1.3.1" evidence="1"/>
<dbReference type="EMBL" id="AE013218">
    <property type="protein sequence ID" value="AAM68061.1"/>
    <property type="molecule type" value="Genomic_DNA"/>
</dbReference>
<dbReference type="RefSeq" id="WP_011054027.1">
    <property type="nucleotide sequence ID" value="NC_004061.1"/>
</dbReference>
<dbReference type="SMR" id="Q8K940"/>
<dbReference type="STRING" id="198804.BUsg_518"/>
<dbReference type="GeneID" id="93003993"/>
<dbReference type="KEGG" id="bas:BUsg_518"/>
<dbReference type="eggNOG" id="COG0036">
    <property type="taxonomic scope" value="Bacteria"/>
</dbReference>
<dbReference type="HOGENOM" id="CLU_054856_2_1_6"/>
<dbReference type="Proteomes" id="UP000000416">
    <property type="component" value="Chromosome"/>
</dbReference>
<dbReference type="GO" id="GO:0004750">
    <property type="term" value="F:D-ribulose-phosphate 3-epimerase activity"/>
    <property type="evidence" value="ECO:0007669"/>
    <property type="project" value="UniProtKB-UniRule"/>
</dbReference>
<dbReference type="GO" id="GO:0046872">
    <property type="term" value="F:metal ion binding"/>
    <property type="evidence" value="ECO:0007669"/>
    <property type="project" value="UniProtKB-UniRule"/>
</dbReference>
<dbReference type="GO" id="GO:0019323">
    <property type="term" value="P:pentose catabolic process"/>
    <property type="evidence" value="ECO:0007669"/>
    <property type="project" value="UniProtKB-UniRule"/>
</dbReference>
<dbReference type="GO" id="GO:0006098">
    <property type="term" value="P:pentose-phosphate shunt"/>
    <property type="evidence" value="ECO:0007669"/>
    <property type="project" value="InterPro"/>
</dbReference>
<dbReference type="CDD" id="cd00429">
    <property type="entry name" value="RPE"/>
    <property type="match status" value="1"/>
</dbReference>
<dbReference type="FunFam" id="3.20.20.70:FF:000004">
    <property type="entry name" value="Ribulose-phosphate 3-epimerase"/>
    <property type="match status" value="1"/>
</dbReference>
<dbReference type="Gene3D" id="3.20.20.70">
    <property type="entry name" value="Aldolase class I"/>
    <property type="match status" value="1"/>
</dbReference>
<dbReference type="HAMAP" id="MF_02227">
    <property type="entry name" value="RPE"/>
    <property type="match status" value="1"/>
</dbReference>
<dbReference type="InterPro" id="IPR013785">
    <property type="entry name" value="Aldolase_TIM"/>
</dbReference>
<dbReference type="InterPro" id="IPR026019">
    <property type="entry name" value="Ribul_P_3_epim"/>
</dbReference>
<dbReference type="InterPro" id="IPR000056">
    <property type="entry name" value="Ribul_P_3_epim-like"/>
</dbReference>
<dbReference type="InterPro" id="IPR011060">
    <property type="entry name" value="RibuloseP-bd_barrel"/>
</dbReference>
<dbReference type="NCBIfam" id="NF004076">
    <property type="entry name" value="PRK05581.1-4"/>
    <property type="match status" value="1"/>
</dbReference>
<dbReference type="NCBIfam" id="TIGR01163">
    <property type="entry name" value="rpe"/>
    <property type="match status" value="1"/>
</dbReference>
<dbReference type="PANTHER" id="PTHR11749">
    <property type="entry name" value="RIBULOSE-5-PHOSPHATE-3-EPIMERASE"/>
    <property type="match status" value="1"/>
</dbReference>
<dbReference type="Pfam" id="PF00834">
    <property type="entry name" value="Ribul_P_3_epim"/>
    <property type="match status" value="1"/>
</dbReference>
<dbReference type="PIRSF" id="PIRSF001461">
    <property type="entry name" value="RPE"/>
    <property type="match status" value="1"/>
</dbReference>
<dbReference type="SUPFAM" id="SSF51366">
    <property type="entry name" value="Ribulose-phoshate binding barrel"/>
    <property type="match status" value="1"/>
</dbReference>
<dbReference type="PROSITE" id="PS01085">
    <property type="entry name" value="RIBUL_P_3_EPIMER_1"/>
    <property type="match status" value="1"/>
</dbReference>
<dbReference type="PROSITE" id="PS01086">
    <property type="entry name" value="RIBUL_P_3_EPIMER_2"/>
    <property type="match status" value="1"/>
</dbReference>
<proteinExistence type="inferred from homology"/>